<reference key="1">
    <citation type="journal article" date="2006" name="PLoS Genet.">
        <title>Genome sequence of Rickettsia bellii illuminates the role of amoebae in gene exchanges between intracellular pathogens.</title>
        <authorList>
            <person name="Ogata H."/>
            <person name="La Scola B."/>
            <person name="Audic S."/>
            <person name="Renesto P."/>
            <person name="Blanc G."/>
            <person name="Robert C."/>
            <person name="Fournier P.-E."/>
            <person name="Claverie J.-M."/>
            <person name="Raoult D."/>
        </authorList>
    </citation>
    <scope>NUCLEOTIDE SEQUENCE [LARGE SCALE GENOMIC DNA]</scope>
    <source>
        <strain>RML369-C</strain>
    </source>
</reference>
<comment type="function">
    <text evidence="1">One of the primary rRNA binding proteins, it binds directly near the 3'-end of the 23S rRNA, where it nucleates assembly of the 50S subunit.</text>
</comment>
<comment type="subunit">
    <text evidence="1">Part of the 50S ribosomal subunit. Forms a cluster with proteins L14 and L19.</text>
</comment>
<comment type="PTM">
    <text evidence="1">Methylated by PrmB.</text>
</comment>
<comment type="similarity">
    <text evidence="1">Belongs to the universal ribosomal protein uL3 family.</text>
</comment>
<organism>
    <name type="scientific">Rickettsia bellii (strain RML369-C)</name>
    <dbReference type="NCBI Taxonomy" id="336407"/>
    <lineage>
        <taxon>Bacteria</taxon>
        <taxon>Pseudomonadati</taxon>
        <taxon>Pseudomonadota</taxon>
        <taxon>Alphaproteobacteria</taxon>
        <taxon>Rickettsiales</taxon>
        <taxon>Rickettsiaceae</taxon>
        <taxon>Rickettsieae</taxon>
        <taxon>Rickettsia</taxon>
        <taxon>belli group</taxon>
    </lineage>
</organism>
<gene>
    <name evidence="1" type="primary">rplC</name>
    <name type="ordered locus">RBE_1062</name>
</gene>
<sequence>MRTGIIAQKVGMTSVFNNNGKRVPLTLVKVDDCQVVGHKIAEKHGYNALVIGIKDKKISRVTKPMKQVFANAKVSPKTKLKEFRISEDNFIDIAASLEVDHFTAGQFIDVTATTIGKGFAGSMKRHNFRGLEASHGVSISHRSHGSTGQRQDPGKVFKGKKMAGHMGCSQVTIQNLKIFAIDKEQGLIMIQGSIPGHKGSYISIKDAIKKISITA</sequence>
<protein>
    <recommendedName>
        <fullName evidence="1">Large ribosomal subunit protein uL3</fullName>
    </recommendedName>
    <alternativeName>
        <fullName evidence="2">50S ribosomal protein L3</fullName>
    </alternativeName>
</protein>
<feature type="chain" id="PRO_0000241402" description="Large ribosomal subunit protein uL3">
    <location>
        <begin position="1"/>
        <end position="215"/>
    </location>
</feature>
<feature type="modified residue" description="N5-methylglutamine" evidence="1">
    <location>
        <position position="151"/>
    </location>
</feature>
<accession>Q1RHM1</accession>
<keyword id="KW-0488">Methylation</keyword>
<keyword id="KW-0687">Ribonucleoprotein</keyword>
<keyword id="KW-0689">Ribosomal protein</keyword>
<keyword id="KW-0694">RNA-binding</keyword>
<keyword id="KW-0699">rRNA-binding</keyword>
<evidence type="ECO:0000255" key="1">
    <source>
        <dbReference type="HAMAP-Rule" id="MF_01325"/>
    </source>
</evidence>
<evidence type="ECO:0000305" key="2"/>
<proteinExistence type="inferred from homology"/>
<name>RL3_RICBR</name>
<dbReference type="EMBL" id="CP000087">
    <property type="protein sequence ID" value="ABE05143.1"/>
    <property type="molecule type" value="Genomic_DNA"/>
</dbReference>
<dbReference type="RefSeq" id="WP_011477721.1">
    <property type="nucleotide sequence ID" value="NC_007940.1"/>
</dbReference>
<dbReference type="SMR" id="Q1RHM1"/>
<dbReference type="KEGG" id="rbe:RBE_1062"/>
<dbReference type="eggNOG" id="COG0087">
    <property type="taxonomic scope" value="Bacteria"/>
</dbReference>
<dbReference type="HOGENOM" id="CLU_044142_2_0_5"/>
<dbReference type="OrthoDB" id="9806135at2"/>
<dbReference type="Proteomes" id="UP000001951">
    <property type="component" value="Chromosome"/>
</dbReference>
<dbReference type="GO" id="GO:1990904">
    <property type="term" value="C:ribonucleoprotein complex"/>
    <property type="evidence" value="ECO:0007669"/>
    <property type="project" value="UniProtKB-KW"/>
</dbReference>
<dbReference type="GO" id="GO:0005840">
    <property type="term" value="C:ribosome"/>
    <property type="evidence" value="ECO:0007669"/>
    <property type="project" value="UniProtKB-KW"/>
</dbReference>
<dbReference type="GO" id="GO:0019843">
    <property type="term" value="F:rRNA binding"/>
    <property type="evidence" value="ECO:0007669"/>
    <property type="project" value="UniProtKB-UniRule"/>
</dbReference>
<dbReference type="GO" id="GO:0003735">
    <property type="term" value="F:structural constituent of ribosome"/>
    <property type="evidence" value="ECO:0007669"/>
    <property type="project" value="InterPro"/>
</dbReference>
<dbReference type="GO" id="GO:0006412">
    <property type="term" value="P:translation"/>
    <property type="evidence" value="ECO:0007669"/>
    <property type="project" value="UniProtKB-UniRule"/>
</dbReference>
<dbReference type="FunFam" id="2.40.30.10:FF:000004">
    <property type="entry name" value="50S ribosomal protein L3"/>
    <property type="match status" value="1"/>
</dbReference>
<dbReference type="Gene3D" id="3.30.160.810">
    <property type="match status" value="1"/>
</dbReference>
<dbReference type="Gene3D" id="2.40.30.10">
    <property type="entry name" value="Translation factors"/>
    <property type="match status" value="1"/>
</dbReference>
<dbReference type="HAMAP" id="MF_01325_B">
    <property type="entry name" value="Ribosomal_uL3_B"/>
    <property type="match status" value="1"/>
</dbReference>
<dbReference type="InterPro" id="IPR000597">
    <property type="entry name" value="Ribosomal_uL3"/>
</dbReference>
<dbReference type="InterPro" id="IPR019927">
    <property type="entry name" value="Ribosomal_uL3_bac/org-type"/>
</dbReference>
<dbReference type="InterPro" id="IPR019926">
    <property type="entry name" value="Ribosomal_uL3_CS"/>
</dbReference>
<dbReference type="InterPro" id="IPR009000">
    <property type="entry name" value="Transl_B-barrel_sf"/>
</dbReference>
<dbReference type="NCBIfam" id="TIGR03625">
    <property type="entry name" value="L3_bact"/>
    <property type="match status" value="1"/>
</dbReference>
<dbReference type="PANTHER" id="PTHR11229">
    <property type="entry name" value="50S RIBOSOMAL PROTEIN L3"/>
    <property type="match status" value="1"/>
</dbReference>
<dbReference type="PANTHER" id="PTHR11229:SF16">
    <property type="entry name" value="LARGE RIBOSOMAL SUBUNIT PROTEIN UL3C"/>
    <property type="match status" value="1"/>
</dbReference>
<dbReference type="Pfam" id="PF00297">
    <property type="entry name" value="Ribosomal_L3"/>
    <property type="match status" value="1"/>
</dbReference>
<dbReference type="SUPFAM" id="SSF50447">
    <property type="entry name" value="Translation proteins"/>
    <property type="match status" value="1"/>
</dbReference>
<dbReference type="PROSITE" id="PS00474">
    <property type="entry name" value="RIBOSOMAL_L3"/>
    <property type="match status" value="1"/>
</dbReference>